<feature type="chain" id="PRO_0000191696" description="STEAP1 protein">
    <location>
        <begin position="1"/>
        <end position="338"/>
    </location>
</feature>
<feature type="transmembrane region" description="Helical" evidence="4">
    <location>
        <begin position="70"/>
        <end position="90"/>
    </location>
</feature>
<feature type="transmembrane region" description="Helical" evidence="4">
    <location>
        <begin position="118"/>
        <end position="138"/>
    </location>
</feature>
<feature type="transmembrane region" description="Helical" evidence="4">
    <location>
        <begin position="163"/>
        <end position="183"/>
    </location>
</feature>
<feature type="transmembrane region" description="Helical" evidence="4">
    <location>
        <begin position="217"/>
        <end position="237"/>
    </location>
</feature>
<feature type="transmembrane region" description="Helical" evidence="4">
    <location>
        <begin position="252"/>
        <end position="272"/>
    </location>
</feature>
<feature type="transmembrane region" description="Helical" evidence="4">
    <location>
        <begin position="290"/>
        <end position="310"/>
    </location>
</feature>
<feature type="domain" description="Ferric oxidoreductase">
    <location>
        <begin position="117"/>
        <end position="264"/>
    </location>
</feature>
<feature type="binding site" evidence="1">
    <location>
        <position position="139"/>
    </location>
    <ligand>
        <name>FAD</name>
        <dbReference type="ChEBI" id="CHEBI:57692"/>
    </ligand>
</feature>
<feature type="binding site" evidence="1">
    <location>
        <position position="160"/>
    </location>
    <ligand>
        <name>FAD</name>
        <dbReference type="ChEBI" id="CHEBI:57692"/>
    </ligand>
</feature>
<feature type="binding site" description="axial binding residue" evidence="3">
    <location>
        <position position="174"/>
    </location>
    <ligand>
        <name>heme b</name>
        <dbReference type="ChEBI" id="CHEBI:60344"/>
    </ligand>
    <ligandPart>
        <name>Fe</name>
        <dbReference type="ChEBI" id="CHEBI:18248"/>
    </ligandPart>
</feature>
<feature type="binding site" evidence="1">
    <location>
        <position position="236"/>
    </location>
    <ligand>
        <name>FAD</name>
        <dbReference type="ChEBI" id="CHEBI:57692"/>
    </ligand>
</feature>
<feature type="binding site" evidence="1">
    <location>
        <position position="253"/>
    </location>
    <ligand>
        <name>FAD</name>
        <dbReference type="ChEBI" id="CHEBI:57692"/>
    </ligand>
</feature>
<feature type="binding site" description="axial binding residue" evidence="3">
    <location>
        <position position="267"/>
    </location>
    <ligand>
        <name>heme b</name>
        <dbReference type="ChEBI" id="CHEBI:60344"/>
    </ligand>
    <ligandPart>
        <name>Fe</name>
        <dbReference type="ChEBI" id="CHEBI:18248"/>
    </ligandPart>
</feature>
<name>STEA1_PIG</name>
<sequence>MESRQDITNQEELWKMKPRKNLEDDYLNEDSRENSMPKRPMLVHLHQTAHFDEFDCPPELQHKQELFPKWHLPIKIAAIVSSLTFLYTLLREVIHPFVTSHQQYFYKIPILVINKVLPMVSITLLALVYLPGVIAAIVQLHNGTKYKKFPHWLDRWMVTRKQFGLLSFFFAVLHAVYSLSYPMRRSYRYKLLNWAYQQVQQNKEDAWIEHDVWRMEIYVSLGIVTLAILALLAVTSIPSVSDSLTWREFHYIQSTLGIVSLLLGTIHALIFAWNKWVDIKQFIWYTPPTFMIAVFLPTVVLICKVILLLPCLRRKILKIRHGWEDVTKINKTEMSSQL</sequence>
<accession>Q9GL50</accession>
<comment type="function">
    <text evidence="1">Does not function as a metalloreductase due to the absence of binding sites for the electron-donating substrate NADPH.</text>
</comment>
<comment type="cofactor">
    <cofactor evidence="1">
        <name>FAD</name>
        <dbReference type="ChEBI" id="CHEBI:57692"/>
    </cofactor>
</comment>
<comment type="cofactor">
    <cofactor evidence="3">
        <name>heme b</name>
        <dbReference type="ChEBI" id="CHEBI:60344"/>
    </cofactor>
</comment>
<comment type="subunit">
    <text evidence="3">Homotrimer.</text>
</comment>
<comment type="subcellular location">
    <subcellularLocation>
        <location evidence="2">Endosome membrane</location>
        <topology evidence="4">Multi-pass membrane protein</topology>
    </subcellularLocation>
    <subcellularLocation>
        <location evidence="3">Cell membrane</location>
        <topology evidence="4">Multi-pass membrane protein</topology>
    </subcellularLocation>
</comment>
<comment type="similarity">
    <text evidence="5">Belongs to the STEAP family.</text>
</comment>
<proteinExistence type="evidence at transcript level"/>
<evidence type="ECO:0000250" key="1">
    <source>
        <dbReference type="UniProtKB" id="Q687X5"/>
    </source>
</evidence>
<evidence type="ECO:0000250" key="2">
    <source>
        <dbReference type="UniProtKB" id="Q9CWR7"/>
    </source>
</evidence>
<evidence type="ECO:0000250" key="3">
    <source>
        <dbReference type="UniProtKB" id="Q9UHE8"/>
    </source>
</evidence>
<evidence type="ECO:0000255" key="4"/>
<evidence type="ECO:0000305" key="5"/>
<gene>
    <name type="primary">STEAP1</name>
    <name type="synonym">STEAP</name>
</gene>
<protein>
    <recommendedName>
        <fullName>STEAP1 protein</fullName>
    </recommendedName>
    <alternativeName>
        <fullName>Six transmembrane endothelial antigen of PAEC</fullName>
    </alternativeName>
    <alternativeName>
        <fullName>Six-transmembrane epithelial antigen of prostate 1</fullName>
    </alternativeName>
</protein>
<organism>
    <name type="scientific">Sus scrofa</name>
    <name type="common">Pig</name>
    <dbReference type="NCBI Taxonomy" id="9823"/>
    <lineage>
        <taxon>Eukaryota</taxon>
        <taxon>Metazoa</taxon>
        <taxon>Chordata</taxon>
        <taxon>Craniata</taxon>
        <taxon>Vertebrata</taxon>
        <taxon>Euteleostomi</taxon>
        <taxon>Mammalia</taxon>
        <taxon>Eutheria</taxon>
        <taxon>Laurasiatheria</taxon>
        <taxon>Artiodactyla</taxon>
        <taxon>Suina</taxon>
        <taxon>Suidae</taxon>
        <taxon>Sus</taxon>
    </lineage>
</organism>
<keyword id="KW-1003">Cell membrane</keyword>
<keyword id="KW-0967">Endosome</keyword>
<keyword id="KW-0274">FAD</keyword>
<keyword id="KW-0285">Flavoprotein</keyword>
<keyword id="KW-0349">Heme</keyword>
<keyword id="KW-0408">Iron</keyword>
<keyword id="KW-0472">Membrane</keyword>
<keyword id="KW-0479">Metal-binding</keyword>
<keyword id="KW-1185">Reference proteome</keyword>
<keyword id="KW-0812">Transmembrane</keyword>
<keyword id="KW-1133">Transmembrane helix</keyword>
<reference key="1">
    <citation type="submission" date="2000-11" db="EMBL/GenBank/DDBJ databases">
        <title>Differential gene expression in endothelial cells during TNF-alpha- and LPS-mediated activation.</title>
        <authorList>
            <person name="Nagasaka T."/>
            <person name="Boulday G."/>
            <person name="Coupel S."/>
            <person name="Coulon F."/>
            <person name="Tesson L."/>
            <person name="Heslan J.-M."/>
            <person name="Soulillou J.-P."/>
            <person name="Charreau B."/>
        </authorList>
    </citation>
    <scope>NUCLEOTIDE SEQUENCE [MRNA]</scope>
</reference>
<dbReference type="EMBL" id="AF319659">
    <property type="protein sequence ID" value="AAG33868.1"/>
    <property type="molecule type" value="mRNA"/>
</dbReference>
<dbReference type="RefSeq" id="NP_999470.1">
    <property type="nucleotide sequence ID" value="NM_214305.2"/>
</dbReference>
<dbReference type="RefSeq" id="XP_003484352.3">
    <property type="nucleotide sequence ID" value="XM_003484304.3"/>
</dbReference>
<dbReference type="SMR" id="Q9GL50"/>
<dbReference type="FunCoup" id="Q9GL50">
    <property type="interactions" value="144"/>
</dbReference>
<dbReference type="STRING" id="9823.ENSSSCP00000016226"/>
<dbReference type="PaxDb" id="9823-ENSSSCP00000016226"/>
<dbReference type="Ensembl" id="ENSSSCT00000016672.5">
    <property type="protein sequence ID" value="ENSSSCP00000016226.3"/>
    <property type="gene ID" value="ENSSSCG00000015301.5"/>
</dbReference>
<dbReference type="Ensembl" id="ENSSSCT00025069196.1">
    <property type="protein sequence ID" value="ENSSSCP00025029798.1"/>
    <property type="gene ID" value="ENSSSCG00025050671.1"/>
</dbReference>
<dbReference type="Ensembl" id="ENSSSCT00055035290.1">
    <property type="protein sequence ID" value="ENSSSCP00055028026.1"/>
    <property type="gene ID" value="ENSSSCG00055018019.1"/>
</dbReference>
<dbReference type="Ensembl" id="ENSSSCT00090024543">
    <property type="protein sequence ID" value="ENSSSCP00090015226"/>
    <property type="gene ID" value="ENSSSCG00090013995"/>
</dbReference>
<dbReference type="Ensembl" id="ENSSSCT00110054163">
    <property type="protein sequence ID" value="ENSSSCP00110037739"/>
    <property type="gene ID" value="ENSSSCG00110028260"/>
</dbReference>
<dbReference type="GeneID" id="397573"/>
<dbReference type="KEGG" id="ssc:397573"/>
<dbReference type="CTD" id="26872"/>
<dbReference type="eggNOG" id="ENOG502QWI9">
    <property type="taxonomic scope" value="Eukaryota"/>
</dbReference>
<dbReference type="GeneTree" id="ENSGT00390000008042"/>
<dbReference type="HOGENOM" id="CLU_034618_0_0_1"/>
<dbReference type="InParanoid" id="Q9GL50"/>
<dbReference type="OMA" id="KQFIWYT"/>
<dbReference type="OrthoDB" id="550646at2759"/>
<dbReference type="Proteomes" id="UP000008227">
    <property type="component" value="Chromosome 9"/>
</dbReference>
<dbReference type="Proteomes" id="UP000314985">
    <property type="component" value="Unplaced"/>
</dbReference>
<dbReference type="Proteomes" id="UP000694570">
    <property type="component" value="Unplaced"/>
</dbReference>
<dbReference type="Proteomes" id="UP000694571">
    <property type="component" value="Unplaced"/>
</dbReference>
<dbReference type="Proteomes" id="UP000694720">
    <property type="component" value="Unplaced"/>
</dbReference>
<dbReference type="Proteomes" id="UP000694722">
    <property type="component" value="Unplaced"/>
</dbReference>
<dbReference type="Proteomes" id="UP000694723">
    <property type="component" value="Unplaced"/>
</dbReference>
<dbReference type="Proteomes" id="UP000694724">
    <property type="component" value="Unplaced"/>
</dbReference>
<dbReference type="Proteomes" id="UP000694725">
    <property type="component" value="Unplaced"/>
</dbReference>
<dbReference type="Proteomes" id="UP000694726">
    <property type="component" value="Unplaced"/>
</dbReference>
<dbReference type="Proteomes" id="UP000694727">
    <property type="component" value="Unplaced"/>
</dbReference>
<dbReference type="Proteomes" id="UP000694728">
    <property type="component" value="Unplaced"/>
</dbReference>
<dbReference type="Bgee" id="ENSSSCG00000015301">
    <property type="expression patterns" value="Expressed in adipose tissue and 35 other cell types or tissues"/>
</dbReference>
<dbReference type="GO" id="GO:0005768">
    <property type="term" value="C:endosome"/>
    <property type="evidence" value="ECO:0000318"/>
    <property type="project" value="GO_Central"/>
</dbReference>
<dbReference type="GO" id="GO:0010008">
    <property type="term" value="C:endosome membrane"/>
    <property type="evidence" value="ECO:0007669"/>
    <property type="project" value="UniProtKB-SubCell"/>
</dbReference>
<dbReference type="GO" id="GO:0005886">
    <property type="term" value="C:plasma membrane"/>
    <property type="evidence" value="ECO:0000250"/>
    <property type="project" value="UniProtKB"/>
</dbReference>
<dbReference type="GO" id="GO:0020037">
    <property type="term" value="F:heme binding"/>
    <property type="evidence" value="ECO:0000250"/>
    <property type="project" value="UniProtKB"/>
</dbReference>
<dbReference type="GO" id="GO:0046872">
    <property type="term" value="F:metal ion binding"/>
    <property type="evidence" value="ECO:0007669"/>
    <property type="project" value="UniProtKB-KW"/>
</dbReference>
<dbReference type="InterPro" id="IPR013130">
    <property type="entry name" value="Fe3_Rdtase_TM_dom"/>
</dbReference>
<dbReference type="InterPro" id="IPR051267">
    <property type="entry name" value="STEAP_metalloreductase"/>
</dbReference>
<dbReference type="PANTHER" id="PTHR14239">
    <property type="entry name" value="DUDULIN-RELATED"/>
    <property type="match status" value="1"/>
</dbReference>
<dbReference type="PANTHER" id="PTHR14239:SF3">
    <property type="entry name" value="METALLOREDUCTASE STEAP1-RELATED"/>
    <property type="match status" value="1"/>
</dbReference>
<dbReference type="Pfam" id="PF01794">
    <property type="entry name" value="Ferric_reduct"/>
    <property type="match status" value="1"/>
</dbReference>